<feature type="chain" id="PRO_0000313358" description="DNA ligase">
    <location>
        <begin position="1"/>
        <end position="677"/>
    </location>
</feature>
<feature type="domain" description="BRCT" evidence="1">
    <location>
        <begin position="601"/>
        <end position="677"/>
    </location>
</feature>
<feature type="active site" description="N6-AMP-lysine intermediate" evidence="1">
    <location>
        <position position="123"/>
    </location>
</feature>
<feature type="binding site" evidence="1">
    <location>
        <begin position="38"/>
        <end position="42"/>
    </location>
    <ligand>
        <name>NAD(+)</name>
        <dbReference type="ChEBI" id="CHEBI:57540"/>
    </ligand>
</feature>
<feature type="binding site" evidence="1">
    <location>
        <begin position="87"/>
        <end position="88"/>
    </location>
    <ligand>
        <name>NAD(+)</name>
        <dbReference type="ChEBI" id="CHEBI:57540"/>
    </ligand>
</feature>
<feature type="binding site" evidence="1">
    <location>
        <position position="121"/>
    </location>
    <ligand>
        <name>NAD(+)</name>
        <dbReference type="ChEBI" id="CHEBI:57540"/>
    </ligand>
</feature>
<feature type="binding site" evidence="1">
    <location>
        <position position="144"/>
    </location>
    <ligand>
        <name>NAD(+)</name>
        <dbReference type="ChEBI" id="CHEBI:57540"/>
    </ligand>
</feature>
<feature type="binding site" evidence="1">
    <location>
        <position position="187"/>
    </location>
    <ligand>
        <name>NAD(+)</name>
        <dbReference type="ChEBI" id="CHEBI:57540"/>
    </ligand>
</feature>
<feature type="binding site" evidence="1">
    <location>
        <position position="300"/>
    </location>
    <ligand>
        <name>NAD(+)</name>
        <dbReference type="ChEBI" id="CHEBI:57540"/>
    </ligand>
</feature>
<feature type="binding site" evidence="1">
    <location>
        <position position="324"/>
    </location>
    <ligand>
        <name>NAD(+)</name>
        <dbReference type="ChEBI" id="CHEBI:57540"/>
    </ligand>
</feature>
<feature type="binding site" evidence="1">
    <location>
        <position position="418"/>
    </location>
    <ligand>
        <name>Zn(2+)</name>
        <dbReference type="ChEBI" id="CHEBI:29105"/>
    </ligand>
</feature>
<feature type="binding site" evidence="1">
    <location>
        <position position="421"/>
    </location>
    <ligand>
        <name>Zn(2+)</name>
        <dbReference type="ChEBI" id="CHEBI:29105"/>
    </ligand>
</feature>
<feature type="binding site" evidence="1">
    <location>
        <position position="436"/>
    </location>
    <ligand>
        <name>Zn(2+)</name>
        <dbReference type="ChEBI" id="CHEBI:29105"/>
    </ligand>
</feature>
<feature type="binding site" evidence="1">
    <location>
        <position position="442"/>
    </location>
    <ligand>
        <name>Zn(2+)</name>
        <dbReference type="ChEBI" id="CHEBI:29105"/>
    </ligand>
</feature>
<sequence length="677" mass="75818">MVSMHREDAQRREAEELRREIERHNHLYYVEAKPEISDYDFDRLLLRLIELEREHPELVTPDSPTGRVGGAVTREFPPVEHREPMLSLSNTYSIGEVEEFSARVGRLLEAEGIRDRDMVAELKFDGVAVSLLYRDGVLVRGATRGNGRRGDDITVNLRTVPTVPLRLQTLDTPFSLGEGREVEVRGEVFMRKEDFTALNDTRPEEDRFANPRNATAGTLKLQDSAEVAVRRLWFVAYYLDGIQDPDTPHFHRLQLLETAGFFTGGHYRLCKGMQEIAAFIARWNEERWHLPYETDGVVLKLNDVRQWKTLGATSKSPRWAIAYKYPAQQATTVLRDVVFQVGRLGTITPVAELEPVRLAGSTVSRSTLHNFDEMRRLGIMIGDRVVIEKSGEVIPKVIRVVTEARPVDARLVELPSRCPACSTPIVREEGEVGFYCPNEAGCPAQLKGRILHFASRNAMDIQNLGEALVEQLVAFGLVHDPGDLYFLQEPQLRNLERMGPKSAQNVVRALDESRSQSYARLLFALGIRHVGQATARELARAFPSIEALEAASEEELADVADIGPVIARSIREWFEAPAVSALLEKLRDARLPLAAEDPKPLINSNFEGLSVVFTGALLRHDRQSASELVLERGGKIVSTVSKKTGLVVAGREAGSKLEKALKLGLRVISEEEFEAML</sequence>
<name>DNLJ_CHLL3</name>
<protein>
    <recommendedName>
        <fullName evidence="1">DNA ligase</fullName>
        <ecNumber evidence="1">6.5.1.2</ecNumber>
    </recommendedName>
    <alternativeName>
        <fullName evidence="1">Polydeoxyribonucleotide synthase [NAD(+)]</fullName>
    </alternativeName>
</protein>
<evidence type="ECO:0000255" key="1">
    <source>
        <dbReference type="HAMAP-Rule" id="MF_01588"/>
    </source>
</evidence>
<comment type="function">
    <text evidence="1">DNA ligase that catalyzes the formation of phosphodiester linkages between 5'-phosphoryl and 3'-hydroxyl groups in double-stranded DNA using NAD as a coenzyme and as the energy source for the reaction. It is essential for DNA replication and repair of damaged DNA.</text>
</comment>
<comment type="catalytic activity">
    <reaction evidence="1">
        <text>NAD(+) + (deoxyribonucleotide)n-3'-hydroxyl + 5'-phospho-(deoxyribonucleotide)m = (deoxyribonucleotide)n+m + AMP + beta-nicotinamide D-nucleotide.</text>
        <dbReference type="EC" id="6.5.1.2"/>
    </reaction>
</comment>
<comment type="cofactor">
    <cofactor evidence="1">
        <name>Mg(2+)</name>
        <dbReference type="ChEBI" id="CHEBI:18420"/>
    </cofactor>
    <cofactor evidence="1">
        <name>Mn(2+)</name>
        <dbReference type="ChEBI" id="CHEBI:29035"/>
    </cofactor>
</comment>
<comment type="similarity">
    <text evidence="1">Belongs to the NAD-dependent DNA ligase family. LigA subfamily.</text>
</comment>
<accession>Q3B278</accession>
<gene>
    <name evidence="1" type="primary">ligA</name>
    <name type="ordered locus">Plut_1699</name>
</gene>
<organism>
    <name type="scientific">Chlorobium luteolum (strain DSM 273 / BCRC 81028 / 2530)</name>
    <name type="common">Pelodictyon luteolum</name>
    <dbReference type="NCBI Taxonomy" id="319225"/>
    <lineage>
        <taxon>Bacteria</taxon>
        <taxon>Pseudomonadati</taxon>
        <taxon>Chlorobiota</taxon>
        <taxon>Chlorobiia</taxon>
        <taxon>Chlorobiales</taxon>
        <taxon>Chlorobiaceae</taxon>
        <taxon>Chlorobium/Pelodictyon group</taxon>
        <taxon>Pelodictyon</taxon>
    </lineage>
</organism>
<dbReference type="EC" id="6.5.1.2" evidence="1"/>
<dbReference type="EMBL" id="CP000096">
    <property type="protein sequence ID" value="ABB24553.1"/>
    <property type="molecule type" value="Genomic_DNA"/>
</dbReference>
<dbReference type="SMR" id="Q3B278"/>
<dbReference type="STRING" id="319225.Plut_1699"/>
<dbReference type="KEGG" id="plt:Plut_1699"/>
<dbReference type="eggNOG" id="COG0272">
    <property type="taxonomic scope" value="Bacteria"/>
</dbReference>
<dbReference type="HOGENOM" id="CLU_007764_2_1_10"/>
<dbReference type="OrthoDB" id="9759736at2"/>
<dbReference type="Proteomes" id="UP000002709">
    <property type="component" value="Chromosome"/>
</dbReference>
<dbReference type="GO" id="GO:0005829">
    <property type="term" value="C:cytosol"/>
    <property type="evidence" value="ECO:0007669"/>
    <property type="project" value="TreeGrafter"/>
</dbReference>
<dbReference type="GO" id="GO:0003677">
    <property type="term" value="F:DNA binding"/>
    <property type="evidence" value="ECO:0007669"/>
    <property type="project" value="InterPro"/>
</dbReference>
<dbReference type="GO" id="GO:0003911">
    <property type="term" value="F:DNA ligase (NAD+) activity"/>
    <property type="evidence" value="ECO:0007669"/>
    <property type="project" value="UniProtKB-UniRule"/>
</dbReference>
<dbReference type="GO" id="GO:0046872">
    <property type="term" value="F:metal ion binding"/>
    <property type="evidence" value="ECO:0007669"/>
    <property type="project" value="UniProtKB-KW"/>
</dbReference>
<dbReference type="GO" id="GO:0006281">
    <property type="term" value="P:DNA repair"/>
    <property type="evidence" value="ECO:0007669"/>
    <property type="project" value="UniProtKB-KW"/>
</dbReference>
<dbReference type="GO" id="GO:0006260">
    <property type="term" value="P:DNA replication"/>
    <property type="evidence" value="ECO:0007669"/>
    <property type="project" value="UniProtKB-KW"/>
</dbReference>
<dbReference type="CDD" id="cd17748">
    <property type="entry name" value="BRCT_DNA_ligase_like"/>
    <property type="match status" value="1"/>
</dbReference>
<dbReference type="CDD" id="cd00114">
    <property type="entry name" value="LIGANc"/>
    <property type="match status" value="1"/>
</dbReference>
<dbReference type="FunFam" id="1.10.150.20:FF:000006">
    <property type="entry name" value="DNA ligase"/>
    <property type="match status" value="1"/>
</dbReference>
<dbReference type="FunFam" id="1.10.150.20:FF:000007">
    <property type="entry name" value="DNA ligase"/>
    <property type="match status" value="1"/>
</dbReference>
<dbReference type="FunFam" id="2.40.50.140:FF:000012">
    <property type="entry name" value="DNA ligase"/>
    <property type="match status" value="1"/>
</dbReference>
<dbReference type="Gene3D" id="6.20.10.30">
    <property type="match status" value="1"/>
</dbReference>
<dbReference type="Gene3D" id="1.10.150.20">
    <property type="entry name" value="5' to 3' exonuclease, C-terminal subdomain"/>
    <property type="match status" value="2"/>
</dbReference>
<dbReference type="Gene3D" id="3.40.50.10190">
    <property type="entry name" value="BRCT domain"/>
    <property type="match status" value="1"/>
</dbReference>
<dbReference type="Gene3D" id="3.30.470.30">
    <property type="entry name" value="DNA ligase/mRNA capping enzyme"/>
    <property type="match status" value="1"/>
</dbReference>
<dbReference type="Gene3D" id="1.10.287.610">
    <property type="entry name" value="Helix hairpin bin"/>
    <property type="match status" value="1"/>
</dbReference>
<dbReference type="Gene3D" id="2.40.50.140">
    <property type="entry name" value="Nucleic acid-binding proteins"/>
    <property type="match status" value="1"/>
</dbReference>
<dbReference type="HAMAP" id="MF_01588">
    <property type="entry name" value="DNA_ligase_A"/>
    <property type="match status" value="1"/>
</dbReference>
<dbReference type="InterPro" id="IPR001357">
    <property type="entry name" value="BRCT_dom"/>
</dbReference>
<dbReference type="InterPro" id="IPR036420">
    <property type="entry name" value="BRCT_dom_sf"/>
</dbReference>
<dbReference type="InterPro" id="IPR041663">
    <property type="entry name" value="DisA/LigA_HHH"/>
</dbReference>
<dbReference type="InterPro" id="IPR001679">
    <property type="entry name" value="DNA_ligase"/>
</dbReference>
<dbReference type="InterPro" id="IPR018239">
    <property type="entry name" value="DNA_ligase_AS"/>
</dbReference>
<dbReference type="InterPro" id="IPR013839">
    <property type="entry name" value="DNAligase_adenylation"/>
</dbReference>
<dbReference type="InterPro" id="IPR013840">
    <property type="entry name" value="DNAligase_N"/>
</dbReference>
<dbReference type="InterPro" id="IPR003583">
    <property type="entry name" value="Hlx-hairpin-Hlx_DNA-bd_motif"/>
</dbReference>
<dbReference type="InterPro" id="IPR012340">
    <property type="entry name" value="NA-bd_OB-fold"/>
</dbReference>
<dbReference type="InterPro" id="IPR004150">
    <property type="entry name" value="NAD_DNA_ligase_OB"/>
</dbReference>
<dbReference type="InterPro" id="IPR010994">
    <property type="entry name" value="RuvA_2-like"/>
</dbReference>
<dbReference type="InterPro" id="IPR004149">
    <property type="entry name" value="Znf_DNAligase_C4"/>
</dbReference>
<dbReference type="NCBIfam" id="TIGR00575">
    <property type="entry name" value="dnlj"/>
    <property type="match status" value="1"/>
</dbReference>
<dbReference type="NCBIfam" id="NF005932">
    <property type="entry name" value="PRK07956.1"/>
    <property type="match status" value="1"/>
</dbReference>
<dbReference type="PANTHER" id="PTHR23389">
    <property type="entry name" value="CHROMOSOME TRANSMISSION FIDELITY FACTOR 18"/>
    <property type="match status" value="1"/>
</dbReference>
<dbReference type="PANTHER" id="PTHR23389:SF9">
    <property type="entry name" value="DNA LIGASE"/>
    <property type="match status" value="1"/>
</dbReference>
<dbReference type="Pfam" id="PF00533">
    <property type="entry name" value="BRCT"/>
    <property type="match status" value="1"/>
</dbReference>
<dbReference type="Pfam" id="PF01653">
    <property type="entry name" value="DNA_ligase_aden"/>
    <property type="match status" value="1"/>
</dbReference>
<dbReference type="Pfam" id="PF03120">
    <property type="entry name" value="DNA_ligase_OB"/>
    <property type="match status" value="1"/>
</dbReference>
<dbReference type="Pfam" id="PF03119">
    <property type="entry name" value="DNA_ligase_ZBD"/>
    <property type="match status" value="1"/>
</dbReference>
<dbReference type="Pfam" id="PF12826">
    <property type="entry name" value="HHH_2"/>
    <property type="match status" value="1"/>
</dbReference>
<dbReference type="PIRSF" id="PIRSF001604">
    <property type="entry name" value="LigA"/>
    <property type="match status" value="1"/>
</dbReference>
<dbReference type="SMART" id="SM00292">
    <property type="entry name" value="BRCT"/>
    <property type="match status" value="1"/>
</dbReference>
<dbReference type="SMART" id="SM00278">
    <property type="entry name" value="HhH1"/>
    <property type="match status" value="4"/>
</dbReference>
<dbReference type="SMART" id="SM00532">
    <property type="entry name" value="LIGANc"/>
    <property type="match status" value="1"/>
</dbReference>
<dbReference type="SUPFAM" id="SSF52113">
    <property type="entry name" value="BRCT domain"/>
    <property type="match status" value="1"/>
</dbReference>
<dbReference type="SUPFAM" id="SSF56091">
    <property type="entry name" value="DNA ligase/mRNA capping enzyme, catalytic domain"/>
    <property type="match status" value="1"/>
</dbReference>
<dbReference type="SUPFAM" id="SSF50249">
    <property type="entry name" value="Nucleic acid-binding proteins"/>
    <property type="match status" value="1"/>
</dbReference>
<dbReference type="SUPFAM" id="SSF47781">
    <property type="entry name" value="RuvA domain 2-like"/>
    <property type="match status" value="1"/>
</dbReference>
<dbReference type="PROSITE" id="PS50172">
    <property type="entry name" value="BRCT"/>
    <property type="match status" value="1"/>
</dbReference>
<dbReference type="PROSITE" id="PS01055">
    <property type="entry name" value="DNA_LIGASE_N1"/>
    <property type="match status" value="1"/>
</dbReference>
<keyword id="KW-0227">DNA damage</keyword>
<keyword id="KW-0234">DNA repair</keyword>
<keyword id="KW-0235">DNA replication</keyword>
<keyword id="KW-0436">Ligase</keyword>
<keyword id="KW-0460">Magnesium</keyword>
<keyword id="KW-0464">Manganese</keyword>
<keyword id="KW-0479">Metal-binding</keyword>
<keyword id="KW-0520">NAD</keyword>
<keyword id="KW-1185">Reference proteome</keyword>
<keyword id="KW-0862">Zinc</keyword>
<proteinExistence type="inferred from homology"/>
<reference key="1">
    <citation type="submission" date="2005-08" db="EMBL/GenBank/DDBJ databases">
        <title>Complete sequence of Pelodictyon luteolum DSM 273.</title>
        <authorList>
            <consortium name="US DOE Joint Genome Institute"/>
            <person name="Copeland A."/>
            <person name="Lucas S."/>
            <person name="Lapidus A."/>
            <person name="Barry K."/>
            <person name="Detter J.C."/>
            <person name="Glavina T."/>
            <person name="Hammon N."/>
            <person name="Israni S."/>
            <person name="Pitluck S."/>
            <person name="Bryant D."/>
            <person name="Schmutz J."/>
            <person name="Larimer F."/>
            <person name="Land M."/>
            <person name="Kyrpides N."/>
            <person name="Ivanova N."/>
            <person name="Richardson P."/>
        </authorList>
    </citation>
    <scope>NUCLEOTIDE SEQUENCE [LARGE SCALE GENOMIC DNA]</scope>
    <source>
        <strain>DSM 273 / BCRC 81028 / 2530</strain>
    </source>
</reference>